<feature type="chain" id="PRO_0000071255" description="Uncharacterized protein R261">
    <location>
        <begin position="1"/>
        <end position="181"/>
    </location>
</feature>
<name>YR261_MIMIV</name>
<dbReference type="EMBL" id="AY653733">
    <property type="protein sequence ID" value="AAV50533.1"/>
    <property type="molecule type" value="Genomic_DNA"/>
</dbReference>
<dbReference type="KEGG" id="vg:9924870"/>
<dbReference type="OrthoDB" id="20545at10239"/>
<dbReference type="Proteomes" id="UP000001134">
    <property type="component" value="Genome"/>
</dbReference>
<dbReference type="Gene3D" id="3.40.50.450">
    <property type="match status" value="1"/>
</dbReference>
<reference key="1">
    <citation type="journal article" date="2004" name="Science">
        <title>The 1.2-megabase genome sequence of Mimivirus.</title>
        <authorList>
            <person name="Raoult D."/>
            <person name="Audic S."/>
            <person name="Robert C."/>
            <person name="Abergel C."/>
            <person name="Renesto P."/>
            <person name="Ogata H."/>
            <person name="La Scola B."/>
            <person name="Susan M."/>
            <person name="Claverie J.-M."/>
        </authorList>
    </citation>
    <scope>NUCLEOTIDE SEQUENCE [LARGE SCALE GENOMIC DNA]</scope>
    <source>
        <strain>Rowbotham-Bradford</strain>
    </source>
</reference>
<gene>
    <name type="ordered locus">MIMI_R261</name>
</gene>
<organismHost>
    <name type="scientific">Acanthamoeba polyphaga</name>
    <name type="common">Amoeba</name>
    <dbReference type="NCBI Taxonomy" id="5757"/>
</organismHost>
<keyword id="KW-1185">Reference proteome</keyword>
<proteinExistence type="predicted"/>
<sequence>MGKIRLAVIGVSGRNKMDFNLLSKEMFDYMIDNVEAYIKYHLETSNDKIVLVSGGSAWADHSVVKLFLEKNFAGLELYLPTEFTNGKFKDSHQGSILNNLHKHFSEQIGENSLDQIFDCILDPNCKVSVHNGFFKRNTLIAEESDHVIAFTFDEKPKGGTLDTWNKIKHNNKLNINLSIYL</sequence>
<organism>
    <name type="scientific">Acanthamoeba polyphaga mimivirus</name>
    <name type="common">APMV</name>
    <dbReference type="NCBI Taxonomy" id="212035"/>
    <lineage>
        <taxon>Viruses</taxon>
        <taxon>Varidnaviria</taxon>
        <taxon>Bamfordvirae</taxon>
        <taxon>Nucleocytoviricota</taxon>
        <taxon>Megaviricetes</taxon>
        <taxon>Imitervirales</taxon>
        <taxon>Mimiviridae</taxon>
        <taxon>Megamimivirinae</taxon>
        <taxon>Mimivirus</taxon>
        <taxon>Mimivirus bradfordmassiliense</taxon>
    </lineage>
</organism>
<accession>Q5UP22</accession>
<protein>
    <recommendedName>
        <fullName>Uncharacterized protein R261</fullName>
    </recommendedName>
</protein>